<name>LOLP2_EPIUN</name>
<evidence type="ECO:0000255" key="1"/>
<evidence type="ECO:0000256" key="2">
    <source>
        <dbReference type="SAM" id="MobiDB-lite"/>
    </source>
</evidence>
<evidence type="ECO:0000269" key="3">
    <source>
    </source>
</evidence>
<evidence type="ECO:0000269" key="4">
    <source>
    </source>
</evidence>
<evidence type="ECO:0000269" key="5">
    <source>
    </source>
</evidence>
<evidence type="ECO:0000269" key="6">
    <source>
    </source>
</evidence>
<evidence type="ECO:0000269" key="7">
    <source>
    </source>
</evidence>
<evidence type="ECO:0000269" key="8">
    <source>
    </source>
</evidence>
<evidence type="ECO:0000269" key="9">
    <source>
    </source>
</evidence>
<evidence type="ECO:0000303" key="10">
    <source>
    </source>
</evidence>
<evidence type="ECO:0000305" key="11"/>
<evidence type="ECO:0000305" key="12">
    <source>
    </source>
</evidence>
<evidence type="ECO:0000305" key="13">
    <source>
    </source>
</evidence>
<dbReference type="EMBL" id="AY723750">
    <property type="protein sequence ID" value="AAZ06938.1"/>
    <property type="molecule type" value="Genomic_DNA"/>
</dbReference>
<dbReference type="GO" id="GO:0016020">
    <property type="term" value="C:membrane"/>
    <property type="evidence" value="ECO:0007669"/>
    <property type="project" value="UniProtKB-SubCell"/>
</dbReference>
<dbReference type="GO" id="GO:0020037">
    <property type="term" value="F:heme binding"/>
    <property type="evidence" value="ECO:0007669"/>
    <property type="project" value="InterPro"/>
</dbReference>
<dbReference type="GO" id="GO:0005506">
    <property type="term" value="F:iron ion binding"/>
    <property type="evidence" value="ECO:0007669"/>
    <property type="project" value="InterPro"/>
</dbReference>
<dbReference type="GO" id="GO:0004497">
    <property type="term" value="F:monooxygenase activity"/>
    <property type="evidence" value="ECO:0007669"/>
    <property type="project" value="InterPro"/>
</dbReference>
<dbReference type="GO" id="GO:0016705">
    <property type="term" value="F:oxidoreductase activity, acting on paired donors, with incorporation or reduction of molecular oxygen"/>
    <property type="evidence" value="ECO:0007669"/>
    <property type="project" value="InterPro"/>
</dbReference>
<dbReference type="GO" id="GO:0009820">
    <property type="term" value="P:alkaloid metabolic process"/>
    <property type="evidence" value="ECO:0007669"/>
    <property type="project" value="UniProtKB-KW"/>
</dbReference>
<dbReference type="Gene3D" id="1.10.630.10">
    <property type="entry name" value="Cytochrome P450"/>
    <property type="match status" value="1"/>
</dbReference>
<dbReference type="InterPro" id="IPR036396">
    <property type="entry name" value="Cyt_P450_sf"/>
</dbReference>
<dbReference type="SUPFAM" id="SSF48264">
    <property type="entry name" value="Cytochrome P450"/>
    <property type="match status" value="1"/>
</dbReference>
<protein>
    <recommendedName>
        <fullName evidence="10">Inactive cytochrome P450 monooxygenase lolP2</fullName>
    </recommendedName>
    <alternativeName>
        <fullName evidence="10">Loline biosynthesis cluster 2 protein P</fullName>
    </alternativeName>
</protein>
<keyword id="KW-0017">Alkaloid metabolism</keyword>
<keyword id="KW-0472">Membrane</keyword>
<keyword id="KW-0812">Transmembrane</keyword>
<keyword id="KW-1133">Transmembrane helix</keyword>
<comment type="function">
    <text evidence="3 4 5 6 7 8 9">Cytochrome P450 monooxygenase; part of the gene cluster that mediates the biosynthesis of loline alkaloids, potent insecticidal agents composed of a pyrrolizidine ring system and an uncommon ether bridge linking carbons 2 and 7 (PubMed:15654104). Lolines are structurally differentiated by the various modifications of the L-amino group and include norloline, loline, N-methylloline, N-acetylloline, N-acetylnorloline, and N-formylloline (PubMed:15861432, PubMed:25531527). The first committed step is the condensation of O-acetyl-L-homoserine (derived from L-aspartic acid) and L-proline, probably catalyzed by the gamma-type pyridoxal 5'-phosphate(PLP)-dependent enzyme lolC, to give the diamino diacid, NACPP (PubMed:15861432, PubMed:16755627). Ensuing cyclization, decarboxylation, and acetylation steps yield 1-exo-acetamidopyrrolizidine (AcAP) (PubMed:24374065). LolO is required for installation of the ether bridge upon the pathway intermediate, 1-exo-acetamidopyrrolizidine (AcAP) (PubMed:29537853). In sequential 2-oxoglutarate- and O(2)-consuming steps, lolO removes hydrogens from C2 and C7 of AcAP to form both carbon-oxygen bonds in N-acetylnorloline (NANL), the precursor to all other lolines (PubMed:24374065, PubMed:29537853). The enzymes lolD, lolE, lolF and lolT have also been proposed to be involved in the ether-bridge installation (PubMed:15654104). Further processing of the exocyclic moiety of NANL by fungal N-acetamidase (LolN), methyltransferase (LolM), and cytochrome P450 (LolP) enzymes, with occasional involvement of a plant acetyltransferase, generates the other known lolines (PubMed:18655839, PubMed:25531527). LolN transforms NANL to norlonine which is monomethylated and dimethylated to respectively lonine and N-methyllonine (NML) by lolM (PubMed:25531527). LolP catalyzes hydroxylation of the methyl group in N-methylloline (NML) and further oxygenation to N-formylloline (NFL) (PubMed:18655839). A plant acetyltransferase is responsible for the acetylation of loline to form N-acetylloline (NAL) (PubMed:25531527). LolA might interact with aspartate kinase to prevent feedback inhibition of its activity by these end products and thereby promote production of L-homoserine from L-aspartate (PubMed:15654104).</text>
</comment>
<comment type="subcellular location">
    <subcellularLocation>
        <location evidence="1">Membrane</location>
        <topology evidence="1">Single-pass membrane protein</topology>
    </subcellularLocation>
</comment>
<comment type="induction">
    <text evidence="3">Expression is induced in loline alkaloid-producing cultures as well as in planta (PubMed:15654104).</text>
</comment>
<comment type="biotechnology">
    <text evidence="13">Loline alkaloids show broad-spectrum anti-insect activity, and different lolines may have different biological activities (PubMed:25531527). In vitro tests of NFL, NAL, NML, and semisynthetic loline derivatives with long carbon-chain acylations on the 1-amine have shown that many are effective against both fall armyworm larvae and European corn borer larvae, but the effects seem to differ depending on the modifications (PubMed:25531527). N-Formylloline reduces the weight gain of fall armyworms by deterring feeding, and does not significantly affect corn borers (PubMed:25531527). In contrast, NAL reduces the weight gain of corn borer larvae without changing larval feeding behavior, indicating that its effect is due to metabolic toxicity. N-formylloline, NAL, and NML are almost as potent as nicotine in insecticidal activity against green bugs (PubMed:25531527).</text>
</comment>
<comment type="similarity">
    <text evidence="11">Belongs to the cytochrome P450 family.</text>
</comment>
<comment type="caution">
    <text evidence="12">Lacks the heme-binding site and is thus probably inactive (PubMed:15654104).</text>
</comment>
<feature type="chain" id="PRO_0000444364" description="Inactive cytochrome P450 monooxygenase lolP2">
    <location>
        <begin position="1"/>
        <end position="184"/>
    </location>
</feature>
<feature type="transmembrane region" description="Helical" evidence="1">
    <location>
        <begin position="10"/>
        <end position="30"/>
    </location>
</feature>
<feature type="region of interest" description="Disordered" evidence="2">
    <location>
        <begin position="161"/>
        <end position="184"/>
    </location>
</feature>
<feature type="compositionally biased region" description="Basic residues" evidence="2">
    <location>
        <begin position="163"/>
        <end position="172"/>
    </location>
</feature>
<feature type="compositionally biased region" description="Low complexity" evidence="2">
    <location>
        <begin position="173"/>
        <end position="184"/>
    </location>
</feature>
<proteinExistence type="evidence at transcript level"/>
<organism>
    <name type="scientific">Epichloe uncinata</name>
    <name type="common">Endophyte fungus</name>
    <name type="synonym">Neotyphodium uncinatum</name>
    <dbReference type="NCBI Taxonomy" id="5050"/>
    <lineage>
        <taxon>Eukaryota</taxon>
        <taxon>Fungi</taxon>
        <taxon>Dikarya</taxon>
        <taxon>Ascomycota</taxon>
        <taxon>Pezizomycotina</taxon>
        <taxon>Sordariomycetes</taxon>
        <taxon>Hypocreomycetidae</taxon>
        <taxon>Hypocreales</taxon>
        <taxon>Clavicipitaceae</taxon>
        <taxon>Epichloe</taxon>
    </lineage>
</organism>
<reference key="1">
    <citation type="journal article" date="2005" name="Genetics">
        <title>Gene clusters for insecticidal loline alkaloids in the grass-endophytic fungus Neotyphodium uncinatum.</title>
        <authorList>
            <person name="Spiering M.J."/>
            <person name="Moon C.D."/>
            <person name="Wilkinson H.H."/>
            <person name="Schardl C.L."/>
        </authorList>
    </citation>
    <scope>NUCLEOTIDE SEQUENCE [GENOMIC DNA]</scope>
    <scope>INDUCTION</scope>
    <scope>FUNCTION</scope>
    <source>
        <strain>CBS 102646</strain>
    </source>
</reference>
<reference key="2">
    <citation type="journal article" date="2005" name="ChemBioChem">
        <title>Biosynthetic precursors of fungal pyrrolizidines, the loline alkaloids.</title>
        <authorList>
            <person name="Blankenship J.D."/>
            <person name="Houseknecht J.B."/>
            <person name="Pal S."/>
            <person name="Bush L.P."/>
            <person name="Grossman R.B."/>
            <person name="Schardl C.L."/>
        </authorList>
    </citation>
    <scope>FUNCTION</scope>
</reference>
<reference key="3">
    <citation type="journal article" date="2006" name="ChemBioChem">
        <title>On the sequence of bond formation in loline alkaloid biosynthesis.</title>
        <authorList>
            <person name="Faulkner J.R."/>
            <person name="Hussaini S.R."/>
            <person name="Blankenship J.D."/>
            <person name="Pal S."/>
            <person name="Branan B.M."/>
            <person name="Grossman R.B."/>
            <person name="Schardl C.L."/>
        </authorList>
    </citation>
    <scope>FUNCTION</scope>
</reference>
<reference key="4">
    <citation type="journal article" date="2008" name="Fungal Genet. Biol.">
        <title>Role of the LolP cytochrome P450 monooxygenase in loline alkaloid biosynthesis.</title>
        <authorList>
            <person name="Spiering M.J."/>
            <person name="Faulkner J.R."/>
            <person name="Zhang D.X."/>
            <person name="Machado C."/>
            <person name="Grossman R.B."/>
            <person name="Schardl C.L."/>
        </authorList>
    </citation>
    <scope>FUNCTION</scope>
    <source>
        <strain>CBS 102646</strain>
    </source>
</reference>
<reference key="5">
    <citation type="journal article" date="2014" name="Phytochemistry">
        <title>Ether bridge formation in loline alkaloid biosynthesis.</title>
        <authorList>
            <person name="Pan J."/>
            <person name="Bhardwaj M."/>
            <person name="Faulkner J.R."/>
            <person name="Nagabhyru P."/>
            <person name="Charlton N.D."/>
            <person name="Higashi R.M."/>
            <person name="Miller A.F."/>
            <person name="Young C.A."/>
            <person name="Grossman R.B."/>
            <person name="Schardl C.L."/>
        </authorList>
    </citation>
    <scope>FUNCTION</scope>
</reference>
<reference key="6">
    <citation type="journal article" date="2014" name="PLoS ONE">
        <title>Enzymes from fungal and plant origin required for chemical diversification of insecticidal loline alkaloids in grass-Epichloe symbiota.</title>
        <authorList>
            <person name="Pan J."/>
            <person name="Bhardwaj M."/>
            <person name="Nagabhyru P."/>
            <person name="Grossman R.B."/>
            <person name="Schardl C.L."/>
        </authorList>
    </citation>
    <scope>FUNCTION</scope>
    <scope>BIOTECHNOLOGY</scope>
</reference>
<reference key="7">
    <citation type="journal article" date="2018" name="Biochemistry">
        <title>Installation of the ether bridge of lolines by the iron- and 2-oxoglutarate-dependent oxygenase, lolO: regio- and stereochemistry of sequential hydroxylation and oxacyclization reactions.</title>
        <authorList>
            <person name="Pan J."/>
            <person name="Bhardwaj M."/>
            <person name="Zhang B."/>
            <person name="Chang W.C."/>
            <person name="Schardl C.L."/>
            <person name="Krebs C."/>
            <person name="Grossman R.B."/>
            <person name="Bollinger J.M. Jr."/>
        </authorList>
    </citation>
    <scope>FUNCTION</scope>
</reference>
<accession>Q4G3R0</accession>
<sequence>MDLTQFNTAGIVWLTVAAIAISYILQSSFLSWYRLRHIPGPFLASISSLWNVLNIVTGRTSPVLEKLPGRYGPLVRTGPNYVLTDDAEILRHVNGVRSTYPRNGWYEGFRVDEYDHMGSHIDTSVHDAIKSKVIGGYNGKDGIDLEGAIGSQVKTLVSEIRRTRGSRPRSRPRWMPARWSRSSP</sequence>
<gene>
    <name evidence="10" type="primary">lolP2</name>
    <name evidence="10" type="synonym">lolP</name>
</gene>